<comment type="function">
    <text evidence="1">Catalyzes the conversion of dihydroorotate to orotate with quinone as electron acceptor.</text>
</comment>
<comment type="catalytic activity">
    <reaction evidence="1">
        <text>(S)-dihydroorotate + a quinone = orotate + a quinol</text>
        <dbReference type="Rhea" id="RHEA:30187"/>
        <dbReference type="ChEBI" id="CHEBI:24646"/>
        <dbReference type="ChEBI" id="CHEBI:30839"/>
        <dbReference type="ChEBI" id="CHEBI:30864"/>
        <dbReference type="ChEBI" id="CHEBI:132124"/>
        <dbReference type="EC" id="1.3.5.2"/>
    </reaction>
</comment>
<comment type="cofactor">
    <cofactor evidence="1">
        <name>FMN</name>
        <dbReference type="ChEBI" id="CHEBI:58210"/>
    </cofactor>
    <text evidence="1">Binds 1 FMN per subunit.</text>
</comment>
<comment type="pathway">
    <text evidence="1">Pyrimidine metabolism; UMP biosynthesis via de novo pathway; orotate from (S)-dihydroorotate (quinone route): step 1/1.</text>
</comment>
<comment type="subunit">
    <text evidence="1">Monomer.</text>
</comment>
<comment type="subcellular location">
    <subcellularLocation>
        <location evidence="1">Cell membrane</location>
        <topology evidence="1">Peripheral membrane protein</topology>
    </subcellularLocation>
</comment>
<comment type="similarity">
    <text evidence="1">Belongs to the dihydroorotate dehydrogenase family. Type 2 subfamily.</text>
</comment>
<evidence type="ECO:0000255" key="1">
    <source>
        <dbReference type="HAMAP-Rule" id="MF_00225"/>
    </source>
</evidence>
<feature type="chain" id="PRO_1000024170" description="Dihydroorotate dehydrogenase (quinone)">
    <location>
        <begin position="1"/>
        <end position="361"/>
    </location>
</feature>
<feature type="active site" description="Nucleophile" evidence="1">
    <location>
        <position position="181"/>
    </location>
</feature>
<feature type="binding site" evidence="1">
    <location>
        <begin position="67"/>
        <end position="71"/>
    </location>
    <ligand>
        <name>FMN</name>
        <dbReference type="ChEBI" id="CHEBI:58210"/>
    </ligand>
</feature>
<feature type="binding site" evidence="1">
    <location>
        <position position="71"/>
    </location>
    <ligand>
        <name>substrate</name>
    </ligand>
</feature>
<feature type="binding site" evidence="1">
    <location>
        <position position="91"/>
    </location>
    <ligand>
        <name>FMN</name>
        <dbReference type="ChEBI" id="CHEBI:58210"/>
    </ligand>
</feature>
<feature type="binding site" evidence="1">
    <location>
        <begin position="116"/>
        <end position="120"/>
    </location>
    <ligand>
        <name>substrate</name>
    </ligand>
</feature>
<feature type="binding site" evidence="1">
    <location>
        <position position="145"/>
    </location>
    <ligand>
        <name>FMN</name>
        <dbReference type="ChEBI" id="CHEBI:58210"/>
    </ligand>
</feature>
<feature type="binding site" evidence="1">
    <location>
        <position position="178"/>
    </location>
    <ligand>
        <name>FMN</name>
        <dbReference type="ChEBI" id="CHEBI:58210"/>
    </ligand>
</feature>
<feature type="binding site" evidence="1">
    <location>
        <position position="178"/>
    </location>
    <ligand>
        <name>substrate</name>
    </ligand>
</feature>
<feature type="binding site" evidence="1">
    <location>
        <position position="183"/>
    </location>
    <ligand>
        <name>substrate</name>
    </ligand>
</feature>
<feature type="binding site" evidence="1">
    <location>
        <position position="223"/>
    </location>
    <ligand>
        <name>FMN</name>
        <dbReference type="ChEBI" id="CHEBI:58210"/>
    </ligand>
</feature>
<feature type="binding site" evidence="1">
    <location>
        <position position="251"/>
    </location>
    <ligand>
        <name>FMN</name>
        <dbReference type="ChEBI" id="CHEBI:58210"/>
    </ligand>
</feature>
<feature type="binding site" evidence="1">
    <location>
        <begin position="252"/>
        <end position="253"/>
    </location>
    <ligand>
        <name>substrate</name>
    </ligand>
</feature>
<feature type="binding site" evidence="1">
    <location>
        <position position="273"/>
    </location>
    <ligand>
        <name>FMN</name>
        <dbReference type="ChEBI" id="CHEBI:58210"/>
    </ligand>
</feature>
<feature type="binding site" evidence="1">
    <location>
        <position position="302"/>
    </location>
    <ligand>
        <name>FMN</name>
        <dbReference type="ChEBI" id="CHEBI:58210"/>
    </ligand>
</feature>
<feature type="binding site" evidence="1">
    <location>
        <begin position="323"/>
        <end position="324"/>
    </location>
    <ligand>
        <name>FMN</name>
        <dbReference type="ChEBI" id="CHEBI:58210"/>
    </ligand>
</feature>
<proteinExistence type="inferred from homology"/>
<keyword id="KW-1003">Cell membrane</keyword>
<keyword id="KW-0285">Flavoprotein</keyword>
<keyword id="KW-0288">FMN</keyword>
<keyword id="KW-0472">Membrane</keyword>
<keyword id="KW-0560">Oxidoreductase</keyword>
<keyword id="KW-0665">Pyrimidine biosynthesis</keyword>
<name>PYRD_DEIGD</name>
<protein>
    <recommendedName>
        <fullName evidence="1">Dihydroorotate dehydrogenase (quinone)</fullName>
        <ecNumber evidence="1">1.3.5.2</ecNumber>
    </recommendedName>
    <alternativeName>
        <fullName evidence="1">DHOdehase</fullName>
        <shortName evidence="1">DHOD</shortName>
        <shortName evidence="1">DHODase</shortName>
    </alternativeName>
    <alternativeName>
        <fullName evidence="1">Dihydroorotate oxidase</fullName>
    </alternativeName>
</protein>
<organism>
    <name type="scientific">Deinococcus geothermalis (strain DSM 11300 / CIP 105573 / AG-3a)</name>
    <dbReference type="NCBI Taxonomy" id="319795"/>
    <lineage>
        <taxon>Bacteria</taxon>
        <taxon>Thermotogati</taxon>
        <taxon>Deinococcota</taxon>
        <taxon>Deinococci</taxon>
        <taxon>Deinococcales</taxon>
        <taxon>Deinococcaceae</taxon>
        <taxon>Deinococcus</taxon>
    </lineage>
</organism>
<sequence length="361" mass="38607">MYRRLLRPALFRLDPEDAHHLTLRALGLASAVPAWPSLVRRLTAPTDLRLTQTLWGRTFSSPLGLAAGLDKNGEAVPAFGALGFGFVEVGTVTPRAQPGNARPRLFRLPSDEALINRMGFNNAGAEALQGQLAAHFARPVPVWVNIGKNKVTPNEEAVQDYREAVRVLQAVADAFVVNVSSPNTPGLRALQAAGDLAALVRAVLDEVEAGRVRTLSRPPVLVKLAPDLHPADFEASVGAVLEAGADGLIIGNTTLRREGLTHPRRGETGGLSGRPLTARSTELVRAAYRLTRGRMPIVGVGGIFTAEDAYAKIRAGARLVEVYTALIYEGPGLPARLNRDLARLLARDGVRHLTEAVGVDL</sequence>
<accession>Q1J132</accession>
<reference key="1">
    <citation type="submission" date="2006-04" db="EMBL/GenBank/DDBJ databases">
        <title>Complete sequence of chromosome of Deinococcus geothermalis DSM 11300.</title>
        <authorList>
            <person name="Copeland A."/>
            <person name="Lucas S."/>
            <person name="Lapidus A."/>
            <person name="Barry K."/>
            <person name="Detter J.C."/>
            <person name="Glavina del Rio T."/>
            <person name="Hammon N."/>
            <person name="Israni S."/>
            <person name="Dalin E."/>
            <person name="Tice H."/>
            <person name="Pitluck S."/>
            <person name="Brettin T."/>
            <person name="Bruce D."/>
            <person name="Han C."/>
            <person name="Tapia R."/>
            <person name="Saunders E."/>
            <person name="Gilna P."/>
            <person name="Schmutz J."/>
            <person name="Larimer F."/>
            <person name="Land M."/>
            <person name="Hauser L."/>
            <person name="Kyrpides N."/>
            <person name="Kim E."/>
            <person name="Daly M.J."/>
            <person name="Fredrickson J.K."/>
            <person name="Makarova K.S."/>
            <person name="Gaidamakova E.K."/>
            <person name="Zhai M."/>
            <person name="Richardson P."/>
        </authorList>
    </citation>
    <scope>NUCLEOTIDE SEQUENCE [LARGE SCALE GENOMIC DNA]</scope>
    <source>
        <strain>DSM 11300 / CIP 105573 / AG-3a</strain>
    </source>
</reference>
<dbReference type="EC" id="1.3.5.2" evidence="1"/>
<dbReference type="EMBL" id="CP000359">
    <property type="protein sequence ID" value="ABF44802.1"/>
    <property type="molecule type" value="Genomic_DNA"/>
</dbReference>
<dbReference type="RefSeq" id="WP_011529644.1">
    <property type="nucleotide sequence ID" value="NC_008025.1"/>
</dbReference>
<dbReference type="SMR" id="Q1J132"/>
<dbReference type="STRING" id="319795.Dgeo_0500"/>
<dbReference type="KEGG" id="dge:Dgeo_0500"/>
<dbReference type="eggNOG" id="COG0167">
    <property type="taxonomic scope" value="Bacteria"/>
</dbReference>
<dbReference type="HOGENOM" id="CLU_013640_2_0_0"/>
<dbReference type="UniPathway" id="UPA00070">
    <property type="reaction ID" value="UER00946"/>
</dbReference>
<dbReference type="Proteomes" id="UP000002431">
    <property type="component" value="Chromosome"/>
</dbReference>
<dbReference type="GO" id="GO:0005737">
    <property type="term" value="C:cytoplasm"/>
    <property type="evidence" value="ECO:0007669"/>
    <property type="project" value="InterPro"/>
</dbReference>
<dbReference type="GO" id="GO:0005886">
    <property type="term" value="C:plasma membrane"/>
    <property type="evidence" value="ECO:0007669"/>
    <property type="project" value="UniProtKB-SubCell"/>
</dbReference>
<dbReference type="GO" id="GO:0106430">
    <property type="term" value="F:dihydroorotate dehydrogenase (quinone) activity"/>
    <property type="evidence" value="ECO:0007669"/>
    <property type="project" value="UniProtKB-EC"/>
</dbReference>
<dbReference type="GO" id="GO:0006207">
    <property type="term" value="P:'de novo' pyrimidine nucleobase biosynthetic process"/>
    <property type="evidence" value="ECO:0007669"/>
    <property type="project" value="InterPro"/>
</dbReference>
<dbReference type="GO" id="GO:0044205">
    <property type="term" value="P:'de novo' UMP biosynthetic process"/>
    <property type="evidence" value="ECO:0007669"/>
    <property type="project" value="UniProtKB-UniRule"/>
</dbReference>
<dbReference type="CDD" id="cd04738">
    <property type="entry name" value="DHOD_2_like"/>
    <property type="match status" value="1"/>
</dbReference>
<dbReference type="FunFam" id="3.20.20.70:FF:000123">
    <property type="entry name" value="Dihydroorotate dehydrogenase (quinone)"/>
    <property type="match status" value="1"/>
</dbReference>
<dbReference type="Gene3D" id="3.20.20.70">
    <property type="entry name" value="Aldolase class I"/>
    <property type="match status" value="1"/>
</dbReference>
<dbReference type="HAMAP" id="MF_00225">
    <property type="entry name" value="DHO_dh_type2"/>
    <property type="match status" value="1"/>
</dbReference>
<dbReference type="InterPro" id="IPR013785">
    <property type="entry name" value="Aldolase_TIM"/>
</dbReference>
<dbReference type="InterPro" id="IPR050074">
    <property type="entry name" value="DHO_dehydrogenase"/>
</dbReference>
<dbReference type="InterPro" id="IPR005719">
    <property type="entry name" value="Dihydroorotate_DH_2"/>
</dbReference>
<dbReference type="InterPro" id="IPR005720">
    <property type="entry name" value="Dihydroorotate_DH_cat"/>
</dbReference>
<dbReference type="InterPro" id="IPR001295">
    <property type="entry name" value="Dihydroorotate_DH_CS"/>
</dbReference>
<dbReference type="NCBIfam" id="NF003645">
    <property type="entry name" value="PRK05286.1-2"/>
    <property type="match status" value="1"/>
</dbReference>
<dbReference type="NCBIfam" id="NF003652">
    <property type="entry name" value="PRK05286.2-5"/>
    <property type="match status" value="1"/>
</dbReference>
<dbReference type="NCBIfam" id="TIGR01036">
    <property type="entry name" value="pyrD_sub2"/>
    <property type="match status" value="1"/>
</dbReference>
<dbReference type="PANTHER" id="PTHR48109:SF4">
    <property type="entry name" value="DIHYDROOROTATE DEHYDROGENASE (QUINONE), MITOCHONDRIAL"/>
    <property type="match status" value="1"/>
</dbReference>
<dbReference type="PANTHER" id="PTHR48109">
    <property type="entry name" value="DIHYDROOROTATE DEHYDROGENASE (QUINONE), MITOCHONDRIAL-RELATED"/>
    <property type="match status" value="1"/>
</dbReference>
<dbReference type="Pfam" id="PF01180">
    <property type="entry name" value="DHO_dh"/>
    <property type="match status" value="1"/>
</dbReference>
<dbReference type="SUPFAM" id="SSF51395">
    <property type="entry name" value="FMN-linked oxidoreductases"/>
    <property type="match status" value="1"/>
</dbReference>
<dbReference type="PROSITE" id="PS00911">
    <property type="entry name" value="DHODEHASE_1"/>
    <property type="match status" value="1"/>
</dbReference>
<dbReference type="PROSITE" id="PS00912">
    <property type="entry name" value="DHODEHASE_2"/>
    <property type="match status" value="1"/>
</dbReference>
<gene>
    <name evidence="1" type="primary">pyrD</name>
    <name type="ordered locus">Dgeo_0500</name>
</gene>